<name>DEF74_ARATH</name>
<reference evidence="3" key="1">
    <citation type="journal article" date="2000" name="Nature">
        <title>Sequence and analysis of chromosome 3 of the plant Arabidopsis thaliana.</title>
        <authorList>
            <person name="Salanoubat M."/>
            <person name="Lemcke K."/>
            <person name="Rieger M."/>
            <person name="Ansorge W."/>
            <person name="Unseld M."/>
            <person name="Fartmann B."/>
            <person name="Valle G."/>
            <person name="Bloecker H."/>
            <person name="Perez-Alonso M."/>
            <person name="Obermaier B."/>
            <person name="Delseny M."/>
            <person name="Boutry M."/>
            <person name="Grivell L.A."/>
            <person name="Mache R."/>
            <person name="Puigdomenech P."/>
            <person name="De Simone V."/>
            <person name="Choisne N."/>
            <person name="Artiguenave F."/>
            <person name="Robert C."/>
            <person name="Brottier P."/>
            <person name="Wincker P."/>
            <person name="Cattolico L."/>
            <person name="Weissenbach J."/>
            <person name="Saurin W."/>
            <person name="Quetier F."/>
            <person name="Schaefer M."/>
            <person name="Mueller-Auer S."/>
            <person name="Gabel C."/>
            <person name="Fuchs M."/>
            <person name="Benes V."/>
            <person name="Wurmbach E."/>
            <person name="Drzonek H."/>
            <person name="Erfle H."/>
            <person name="Jordan N."/>
            <person name="Bangert S."/>
            <person name="Wiedelmann R."/>
            <person name="Kranz H."/>
            <person name="Voss H."/>
            <person name="Holland R."/>
            <person name="Brandt P."/>
            <person name="Nyakatura G."/>
            <person name="Vezzi A."/>
            <person name="D'Angelo M."/>
            <person name="Pallavicini A."/>
            <person name="Toppo S."/>
            <person name="Simionati B."/>
            <person name="Conrad A."/>
            <person name="Hornischer K."/>
            <person name="Kauer G."/>
            <person name="Loehnert T.-H."/>
            <person name="Nordsiek G."/>
            <person name="Reichelt J."/>
            <person name="Scharfe M."/>
            <person name="Schoen O."/>
            <person name="Bargues M."/>
            <person name="Terol J."/>
            <person name="Climent J."/>
            <person name="Navarro P."/>
            <person name="Collado C."/>
            <person name="Perez-Perez A."/>
            <person name="Ottenwaelder B."/>
            <person name="Duchemin D."/>
            <person name="Cooke R."/>
            <person name="Laudie M."/>
            <person name="Berger-Llauro C."/>
            <person name="Purnelle B."/>
            <person name="Masuy D."/>
            <person name="de Haan M."/>
            <person name="Maarse A.C."/>
            <person name="Alcaraz J.-P."/>
            <person name="Cottet A."/>
            <person name="Casacuberta E."/>
            <person name="Monfort A."/>
            <person name="Argiriou A."/>
            <person name="Flores M."/>
            <person name="Liguori R."/>
            <person name="Vitale D."/>
            <person name="Mannhaupt G."/>
            <person name="Haase D."/>
            <person name="Schoof H."/>
            <person name="Rudd S."/>
            <person name="Zaccaria P."/>
            <person name="Mewes H.-W."/>
            <person name="Mayer K.F.X."/>
            <person name="Kaul S."/>
            <person name="Town C.D."/>
            <person name="Koo H.L."/>
            <person name="Tallon L.J."/>
            <person name="Jenkins J."/>
            <person name="Rooney T."/>
            <person name="Rizzo M."/>
            <person name="Walts A."/>
            <person name="Utterback T."/>
            <person name="Fujii C.Y."/>
            <person name="Shea T.P."/>
            <person name="Creasy T.H."/>
            <person name="Haas B."/>
            <person name="Maiti R."/>
            <person name="Wu D."/>
            <person name="Peterson J."/>
            <person name="Van Aken S."/>
            <person name="Pai G."/>
            <person name="Militscher J."/>
            <person name="Sellers P."/>
            <person name="Gill J.E."/>
            <person name="Feldblyum T.V."/>
            <person name="Preuss D."/>
            <person name="Lin X."/>
            <person name="Nierman W.C."/>
            <person name="Salzberg S.L."/>
            <person name="White O."/>
            <person name="Venter J.C."/>
            <person name="Fraser C.M."/>
            <person name="Kaneko T."/>
            <person name="Nakamura Y."/>
            <person name="Sato S."/>
            <person name="Kato T."/>
            <person name="Asamizu E."/>
            <person name="Sasamoto S."/>
            <person name="Kimura T."/>
            <person name="Idesawa K."/>
            <person name="Kawashima K."/>
            <person name="Kishida Y."/>
            <person name="Kiyokawa C."/>
            <person name="Kohara M."/>
            <person name="Matsumoto M."/>
            <person name="Matsuno A."/>
            <person name="Muraki A."/>
            <person name="Nakayama S."/>
            <person name="Nakazaki N."/>
            <person name="Shinpo S."/>
            <person name="Takeuchi C."/>
            <person name="Wada T."/>
            <person name="Watanabe A."/>
            <person name="Yamada M."/>
            <person name="Yasuda M."/>
            <person name="Tabata S."/>
        </authorList>
    </citation>
    <scope>NUCLEOTIDE SEQUENCE [LARGE SCALE GENOMIC DNA]</scope>
    <source>
        <strain>cv. Columbia</strain>
    </source>
</reference>
<reference key="2">
    <citation type="journal article" date="2017" name="Plant J.">
        <title>Araport11: a complete reannotation of the Arabidopsis thaliana reference genome.</title>
        <authorList>
            <person name="Cheng C.Y."/>
            <person name="Krishnakumar V."/>
            <person name="Chan A.P."/>
            <person name="Thibaud-Nissen F."/>
            <person name="Schobel S."/>
            <person name="Town C.D."/>
        </authorList>
    </citation>
    <scope>GENOME REANNOTATION</scope>
    <source>
        <strain>cv. Columbia</strain>
    </source>
</reference>
<reference evidence="3" key="3">
    <citation type="journal article" date="2001" name="Plant Mol. Biol.">
        <title>Two large Arabidopsis thaliana gene families are homologous to the Brassica gene superfamily that encodes pollen coat proteins and the male component of the self-incompatibility response.</title>
        <authorList>
            <person name="Vanoosthuyse V."/>
            <person name="Miege C."/>
            <person name="Dumas C."/>
            <person name="Cock J.M."/>
        </authorList>
    </citation>
    <scope>IDENTIFICATION</scope>
</reference>
<reference key="4">
    <citation type="journal article" date="2005" name="Plant Physiol.">
        <title>Genome organization of more than 300 defensin-like genes in Arabidopsis.</title>
        <authorList>
            <person name="Silverstein K.A.T."/>
            <person name="Graham M.A."/>
            <person name="Paape T.D."/>
            <person name="VandenBosch K.A."/>
        </authorList>
    </citation>
    <scope>GENE FAMILY</scope>
</reference>
<proteinExistence type="evidence at transcript level"/>
<feature type="signal peptide" evidence="2">
    <location>
        <begin position="1"/>
        <end position="28"/>
    </location>
</feature>
<feature type="chain" id="PRO_0000017282" description="Defensin-like protein 74">
    <location>
        <begin position="29"/>
        <end position="78"/>
    </location>
</feature>
<feature type="disulfide bond" evidence="1">
    <location>
        <begin position="32"/>
        <end position="73"/>
    </location>
</feature>
<feature type="disulfide bond" evidence="1">
    <location>
        <begin position="36"/>
        <end position="58"/>
    </location>
</feature>
<feature type="disulfide bond" evidence="1">
    <location>
        <begin position="42"/>
        <end position="71"/>
    </location>
</feature>
<feature type="disulfide bond" evidence="1">
    <location>
        <begin position="46"/>
        <end position="72"/>
    </location>
</feature>
<sequence length="78" mass="8766">MNYKIGIMSLLVITSIIFLFLVPDKVEAQKECIGPCDMFTDCQAACVGIRKGYNYGQCVAWKPKDDDPFTCCCYKLTP</sequence>
<evidence type="ECO:0000250" key="1"/>
<evidence type="ECO:0000255" key="2"/>
<evidence type="ECO:0000305" key="3"/>
<accession>P82758</accession>
<dbReference type="EMBL" id="AC016827">
    <property type="status" value="NOT_ANNOTATED_CDS"/>
    <property type="molecule type" value="Genomic_DNA"/>
</dbReference>
<dbReference type="EMBL" id="CP002686">
    <property type="protein sequence ID" value="AEE74487.1"/>
    <property type="molecule type" value="Genomic_DNA"/>
</dbReference>
<dbReference type="RefSeq" id="NP_001030653.1">
    <property type="nucleotide sequence ID" value="NM_001035576.2"/>
</dbReference>
<dbReference type="SMR" id="P82758"/>
<dbReference type="PaxDb" id="3702-AT3G07005.1"/>
<dbReference type="ProteomicsDB" id="224109"/>
<dbReference type="EnsemblPlants" id="AT3G07005.1">
    <property type="protein sequence ID" value="AT3G07005.1"/>
    <property type="gene ID" value="AT3G07005"/>
</dbReference>
<dbReference type="GeneID" id="3768865"/>
<dbReference type="Gramene" id="AT3G07005.1">
    <property type="protein sequence ID" value="AT3G07005.1"/>
    <property type="gene ID" value="AT3G07005"/>
</dbReference>
<dbReference type="KEGG" id="ath:AT3G07005"/>
<dbReference type="Araport" id="AT3G07005"/>
<dbReference type="TAIR" id="AT3G07005">
    <property type="gene designation" value="LCR43"/>
</dbReference>
<dbReference type="HOGENOM" id="CLU_2761219_0_0_1"/>
<dbReference type="InParanoid" id="P82758"/>
<dbReference type="OMA" id="KECIGPC"/>
<dbReference type="PhylomeDB" id="P82758"/>
<dbReference type="PRO" id="PR:P82758"/>
<dbReference type="Proteomes" id="UP000006548">
    <property type="component" value="Chromosome 3"/>
</dbReference>
<dbReference type="ExpressionAtlas" id="P82758">
    <property type="expression patterns" value="baseline"/>
</dbReference>
<dbReference type="GO" id="GO:0005576">
    <property type="term" value="C:extracellular region"/>
    <property type="evidence" value="ECO:0007669"/>
    <property type="project" value="UniProtKB-SubCell"/>
</dbReference>
<dbReference type="GO" id="GO:0050832">
    <property type="term" value="P:defense response to fungus"/>
    <property type="evidence" value="ECO:0007669"/>
    <property type="project" value="UniProtKB-KW"/>
</dbReference>
<dbReference type="GO" id="GO:0031640">
    <property type="term" value="P:killing of cells of another organism"/>
    <property type="evidence" value="ECO:0007669"/>
    <property type="project" value="UniProtKB-KW"/>
</dbReference>
<dbReference type="InterPro" id="IPR010851">
    <property type="entry name" value="DEFL"/>
</dbReference>
<dbReference type="Pfam" id="PF25052">
    <property type="entry name" value="AtDEF-like"/>
    <property type="match status" value="1"/>
</dbReference>
<keyword id="KW-0929">Antimicrobial</keyword>
<keyword id="KW-1015">Disulfide bond</keyword>
<keyword id="KW-0295">Fungicide</keyword>
<keyword id="KW-0611">Plant defense</keyword>
<keyword id="KW-1185">Reference proteome</keyword>
<keyword id="KW-0964">Secreted</keyword>
<keyword id="KW-0732">Signal</keyword>
<comment type="subcellular location">
    <subcellularLocation>
        <location evidence="1">Secreted</location>
    </subcellularLocation>
</comment>
<comment type="similarity">
    <text evidence="3">Belongs to the DEFL family.</text>
</comment>
<protein>
    <recommendedName>
        <fullName>Defensin-like protein 74</fullName>
    </recommendedName>
    <alternativeName>
        <fullName>Low-molecular-weight cysteine-rich protein 43</fullName>
        <shortName>Protein LCR43</shortName>
    </alternativeName>
</protein>
<gene>
    <name type="primary">LCR43</name>
    <name type="ordered locus">At3g07005</name>
    <name type="ORF">F17A9</name>
</gene>
<organism evidence="3">
    <name type="scientific">Arabidopsis thaliana</name>
    <name type="common">Mouse-ear cress</name>
    <dbReference type="NCBI Taxonomy" id="3702"/>
    <lineage>
        <taxon>Eukaryota</taxon>
        <taxon>Viridiplantae</taxon>
        <taxon>Streptophyta</taxon>
        <taxon>Embryophyta</taxon>
        <taxon>Tracheophyta</taxon>
        <taxon>Spermatophyta</taxon>
        <taxon>Magnoliopsida</taxon>
        <taxon>eudicotyledons</taxon>
        <taxon>Gunneridae</taxon>
        <taxon>Pentapetalae</taxon>
        <taxon>rosids</taxon>
        <taxon>malvids</taxon>
        <taxon>Brassicales</taxon>
        <taxon>Brassicaceae</taxon>
        <taxon>Camelineae</taxon>
        <taxon>Arabidopsis</taxon>
    </lineage>
</organism>